<sequence length="131" mass="14101">MSEIPGDLKFLKSHEWARVESNGRVTVGISDHAQGLLGDLVYVELPGVGDTVQVGNGAAVVESVKAASDVYSPVSGTVVEVNSALSDKPETINEDAYGEGWIFVVEIDDKEQLNDLLDPDDYAELLEDDDH</sequence>
<dbReference type="EMBL" id="AE008923">
    <property type="protein sequence ID" value="AAM37905.1"/>
    <property type="molecule type" value="Genomic_DNA"/>
</dbReference>
<dbReference type="RefSeq" id="WP_003482419.1">
    <property type="nucleotide sequence ID" value="NC_003919.1"/>
</dbReference>
<dbReference type="SMR" id="Q8PI38"/>
<dbReference type="GeneID" id="97511324"/>
<dbReference type="KEGG" id="xac:XAC3060"/>
<dbReference type="eggNOG" id="COG0509">
    <property type="taxonomic scope" value="Bacteria"/>
</dbReference>
<dbReference type="HOGENOM" id="CLU_097408_2_2_6"/>
<dbReference type="Proteomes" id="UP000000576">
    <property type="component" value="Chromosome"/>
</dbReference>
<dbReference type="GO" id="GO:0005829">
    <property type="term" value="C:cytosol"/>
    <property type="evidence" value="ECO:0007669"/>
    <property type="project" value="TreeGrafter"/>
</dbReference>
<dbReference type="GO" id="GO:0005960">
    <property type="term" value="C:glycine cleavage complex"/>
    <property type="evidence" value="ECO:0007669"/>
    <property type="project" value="InterPro"/>
</dbReference>
<dbReference type="GO" id="GO:0019464">
    <property type="term" value="P:glycine decarboxylation via glycine cleavage system"/>
    <property type="evidence" value="ECO:0007669"/>
    <property type="project" value="UniProtKB-UniRule"/>
</dbReference>
<dbReference type="CDD" id="cd06848">
    <property type="entry name" value="GCS_H"/>
    <property type="match status" value="1"/>
</dbReference>
<dbReference type="Gene3D" id="2.40.50.100">
    <property type="match status" value="1"/>
</dbReference>
<dbReference type="HAMAP" id="MF_00272">
    <property type="entry name" value="GcvH"/>
    <property type="match status" value="1"/>
</dbReference>
<dbReference type="InterPro" id="IPR003016">
    <property type="entry name" value="2-oxoA_DH_lipoyl-BS"/>
</dbReference>
<dbReference type="InterPro" id="IPR000089">
    <property type="entry name" value="Biotin_lipoyl"/>
</dbReference>
<dbReference type="InterPro" id="IPR002930">
    <property type="entry name" value="GCV_H"/>
</dbReference>
<dbReference type="InterPro" id="IPR033753">
    <property type="entry name" value="GCV_H/Fam206"/>
</dbReference>
<dbReference type="InterPro" id="IPR017453">
    <property type="entry name" value="GCV_H_sub"/>
</dbReference>
<dbReference type="InterPro" id="IPR011053">
    <property type="entry name" value="Single_hybrid_motif"/>
</dbReference>
<dbReference type="NCBIfam" id="TIGR00527">
    <property type="entry name" value="gcvH"/>
    <property type="match status" value="1"/>
</dbReference>
<dbReference type="NCBIfam" id="NF002270">
    <property type="entry name" value="PRK01202.1"/>
    <property type="match status" value="1"/>
</dbReference>
<dbReference type="PANTHER" id="PTHR11715">
    <property type="entry name" value="GLYCINE CLEAVAGE SYSTEM H PROTEIN"/>
    <property type="match status" value="1"/>
</dbReference>
<dbReference type="PANTHER" id="PTHR11715:SF3">
    <property type="entry name" value="GLYCINE CLEAVAGE SYSTEM H PROTEIN-RELATED"/>
    <property type="match status" value="1"/>
</dbReference>
<dbReference type="Pfam" id="PF01597">
    <property type="entry name" value="GCV_H"/>
    <property type="match status" value="1"/>
</dbReference>
<dbReference type="SUPFAM" id="SSF51230">
    <property type="entry name" value="Single hybrid motif"/>
    <property type="match status" value="1"/>
</dbReference>
<dbReference type="PROSITE" id="PS50968">
    <property type="entry name" value="BIOTINYL_LIPOYL"/>
    <property type="match status" value="1"/>
</dbReference>
<dbReference type="PROSITE" id="PS00189">
    <property type="entry name" value="LIPOYL"/>
    <property type="match status" value="1"/>
</dbReference>
<evidence type="ECO:0000255" key="1">
    <source>
        <dbReference type="HAMAP-Rule" id="MF_00272"/>
    </source>
</evidence>
<evidence type="ECO:0000255" key="2">
    <source>
        <dbReference type="PROSITE-ProRule" id="PRU01066"/>
    </source>
</evidence>
<reference key="1">
    <citation type="journal article" date="2002" name="Nature">
        <title>Comparison of the genomes of two Xanthomonas pathogens with differing host specificities.</title>
        <authorList>
            <person name="da Silva A.C.R."/>
            <person name="Ferro J.A."/>
            <person name="Reinach F.C."/>
            <person name="Farah C.S."/>
            <person name="Furlan L.R."/>
            <person name="Quaggio R.B."/>
            <person name="Monteiro-Vitorello C.B."/>
            <person name="Van Sluys M.A."/>
            <person name="Almeida N.F. Jr."/>
            <person name="Alves L.M.C."/>
            <person name="do Amaral A.M."/>
            <person name="Bertolini M.C."/>
            <person name="Camargo L.E.A."/>
            <person name="Camarotte G."/>
            <person name="Cannavan F."/>
            <person name="Cardozo J."/>
            <person name="Chambergo F."/>
            <person name="Ciapina L.P."/>
            <person name="Cicarelli R.M.B."/>
            <person name="Coutinho L.L."/>
            <person name="Cursino-Santos J.R."/>
            <person name="El-Dorry H."/>
            <person name="Faria J.B."/>
            <person name="Ferreira A.J.S."/>
            <person name="Ferreira R.C.C."/>
            <person name="Ferro M.I.T."/>
            <person name="Formighieri E.F."/>
            <person name="Franco M.C."/>
            <person name="Greggio C.C."/>
            <person name="Gruber A."/>
            <person name="Katsuyama A.M."/>
            <person name="Kishi L.T."/>
            <person name="Leite R.P."/>
            <person name="Lemos E.G.M."/>
            <person name="Lemos M.V.F."/>
            <person name="Locali E.C."/>
            <person name="Machado M.A."/>
            <person name="Madeira A.M.B.N."/>
            <person name="Martinez-Rossi N.M."/>
            <person name="Martins E.C."/>
            <person name="Meidanis J."/>
            <person name="Menck C.F.M."/>
            <person name="Miyaki C.Y."/>
            <person name="Moon D.H."/>
            <person name="Moreira L.M."/>
            <person name="Novo M.T.M."/>
            <person name="Okura V.K."/>
            <person name="Oliveira M.C."/>
            <person name="Oliveira V.R."/>
            <person name="Pereira H.A."/>
            <person name="Rossi A."/>
            <person name="Sena J.A.D."/>
            <person name="Silva C."/>
            <person name="de Souza R.F."/>
            <person name="Spinola L.A.F."/>
            <person name="Takita M.A."/>
            <person name="Tamura R.E."/>
            <person name="Teixeira E.C."/>
            <person name="Tezza R.I.D."/>
            <person name="Trindade dos Santos M."/>
            <person name="Truffi D."/>
            <person name="Tsai S.M."/>
            <person name="White F.F."/>
            <person name="Setubal J.C."/>
            <person name="Kitajima J.P."/>
        </authorList>
    </citation>
    <scope>NUCLEOTIDE SEQUENCE [LARGE SCALE GENOMIC DNA]</scope>
    <source>
        <strain>306</strain>
    </source>
</reference>
<gene>
    <name evidence="1" type="primary">gcvH</name>
    <name type="ordered locus">XAC3060</name>
</gene>
<organism>
    <name type="scientific">Xanthomonas axonopodis pv. citri (strain 306)</name>
    <dbReference type="NCBI Taxonomy" id="190486"/>
    <lineage>
        <taxon>Bacteria</taxon>
        <taxon>Pseudomonadati</taxon>
        <taxon>Pseudomonadota</taxon>
        <taxon>Gammaproteobacteria</taxon>
        <taxon>Lysobacterales</taxon>
        <taxon>Lysobacteraceae</taxon>
        <taxon>Xanthomonas</taxon>
    </lineage>
</organism>
<proteinExistence type="inferred from homology"/>
<feature type="chain" id="PRO_0000166267" description="Glycine cleavage system H protein">
    <location>
        <begin position="1"/>
        <end position="131"/>
    </location>
</feature>
<feature type="domain" description="Lipoyl-binding" evidence="2">
    <location>
        <begin position="24"/>
        <end position="106"/>
    </location>
</feature>
<feature type="modified residue" description="N6-lipoyllysine" evidence="1">
    <location>
        <position position="65"/>
    </location>
</feature>
<keyword id="KW-0450">Lipoyl</keyword>
<comment type="function">
    <text evidence="1">The glycine cleavage system catalyzes the degradation of glycine. The H protein shuttles the methylamine group of glycine from the P protein to the T protein.</text>
</comment>
<comment type="cofactor">
    <cofactor evidence="1">
        <name>(R)-lipoate</name>
        <dbReference type="ChEBI" id="CHEBI:83088"/>
    </cofactor>
    <text evidence="1">Binds 1 lipoyl cofactor covalently.</text>
</comment>
<comment type="subunit">
    <text evidence="1">The glycine cleavage system is composed of four proteins: P, T, L and H.</text>
</comment>
<comment type="similarity">
    <text evidence="1">Belongs to the GcvH family.</text>
</comment>
<accession>Q8PI38</accession>
<protein>
    <recommendedName>
        <fullName evidence="1">Glycine cleavage system H protein</fullName>
    </recommendedName>
</protein>
<name>GCSH_XANAC</name>